<keyword id="KW-0067">ATP-binding</keyword>
<keyword id="KW-0143">Chaperone</keyword>
<keyword id="KW-0963">Cytoplasm</keyword>
<keyword id="KW-0547">Nucleotide-binding</keyword>
<keyword id="KW-1185">Reference proteome</keyword>
<keyword id="KW-0346">Stress response</keyword>
<reference key="1">
    <citation type="journal article" date="2009" name="J. Bacteriol.">
        <title>The genome of Thermosipho africanus TCF52B: lateral genetic connections to the Firmicutes and Archaea.</title>
        <authorList>
            <person name="Nesboe C.L."/>
            <person name="Bapteste E."/>
            <person name="Curtis B."/>
            <person name="Dahle H."/>
            <person name="Lopez P."/>
            <person name="Macleod D."/>
            <person name="Dlutek M."/>
            <person name="Bowman S."/>
            <person name="Zhaxybayeva O."/>
            <person name="Birkeland N.-K."/>
            <person name="Doolittle W.F."/>
        </authorList>
    </citation>
    <scope>NUCLEOTIDE SEQUENCE [LARGE SCALE GENOMIC DNA]</scope>
    <source>
        <strain>TCF52B</strain>
    </source>
</reference>
<dbReference type="EMBL" id="CP001185">
    <property type="protein sequence ID" value="ACJ76253.1"/>
    <property type="molecule type" value="Genomic_DNA"/>
</dbReference>
<dbReference type="RefSeq" id="WP_012580445.1">
    <property type="nucleotide sequence ID" value="NC_011653.1"/>
</dbReference>
<dbReference type="SMR" id="B7IE26"/>
<dbReference type="STRING" id="484019.THA_1822"/>
<dbReference type="KEGG" id="taf:THA_1822"/>
<dbReference type="eggNOG" id="COG1220">
    <property type="taxonomic scope" value="Bacteria"/>
</dbReference>
<dbReference type="HOGENOM" id="CLU_033123_0_0_0"/>
<dbReference type="OrthoDB" id="9804062at2"/>
<dbReference type="Proteomes" id="UP000002453">
    <property type="component" value="Chromosome"/>
</dbReference>
<dbReference type="GO" id="GO:0009376">
    <property type="term" value="C:HslUV protease complex"/>
    <property type="evidence" value="ECO:0007669"/>
    <property type="project" value="UniProtKB-UniRule"/>
</dbReference>
<dbReference type="GO" id="GO:0005524">
    <property type="term" value="F:ATP binding"/>
    <property type="evidence" value="ECO:0007669"/>
    <property type="project" value="UniProtKB-UniRule"/>
</dbReference>
<dbReference type="GO" id="GO:0016887">
    <property type="term" value="F:ATP hydrolysis activity"/>
    <property type="evidence" value="ECO:0007669"/>
    <property type="project" value="InterPro"/>
</dbReference>
<dbReference type="GO" id="GO:0008233">
    <property type="term" value="F:peptidase activity"/>
    <property type="evidence" value="ECO:0007669"/>
    <property type="project" value="InterPro"/>
</dbReference>
<dbReference type="GO" id="GO:0036402">
    <property type="term" value="F:proteasome-activating activity"/>
    <property type="evidence" value="ECO:0007669"/>
    <property type="project" value="UniProtKB-UniRule"/>
</dbReference>
<dbReference type="GO" id="GO:0043335">
    <property type="term" value="P:protein unfolding"/>
    <property type="evidence" value="ECO:0007669"/>
    <property type="project" value="UniProtKB-UniRule"/>
</dbReference>
<dbReference type="GO" id="GO:0051603">
    <property type="term" value="P:proteolysis involved in protein catabolic process"/>
    <property type="evidence" value="ECO:0007669"/>
    <property type="project" value="TreeGrafter"/>
</dbReference>
<dbReference type="CDD" id="cd19498">
    <property type="entry name" value="RecA-like_HslU"/>
    <property type="match status" value="1"/>
</dbReference>
<dbReference type="Gene3D" id="1.10.8.60">
    <property type="match status" value="1"/>
</dbReference>
<dbReference type="Gene3D" id="3.40.50.300">
    <property type="entry name" value="P-loop containing nucleotide triphosphate hydrolases"/>
    <property type="match status" value="2"/>
</dbReference>
<dbReference type="HAMAP" id="MF_00249">
    <property type="entry name" value="HslU"/>
    <property type="match status" value="1"/>
</dbReference>
<dbReference type="InterPro" id="IPR003593">
    <property type="entry name" value="AAA+_ATPase"/>
</dbReference>
<dbReference type="InterPro" id="IPR050052">
    <property type="entry name" value="ATP-dep_Clp_protease_ClpX"/>
</dbReference>
<dbReference type="InterPro" id="IPR003959">
    <property type="entry name" value="ATPase_AAA_core"/>
</dbReference>
<dbReference type="InterPro" id="IPR019489">
    <property type="entry name" value="Clp_ATPase_C"/>
</dbReference>
<dbReference type="InterPro" id="IPR004491">
    <property type="entry name" value="HslU"/>
</dbReference>
<dbReference type="InterPro" id="IPR027417">
    <property type="entry name" value="P-loop_NTPase"/>
</dbReference>
<dbReference type="NCBIfam" id="TIGR00390">
    <property type="entry name" value="hslU"/>
    <property type="match status" value="1"/>
</dbReference>
<dbReference type="NCBIfam" id="NF003544">
    <property type="entry name" value="PRK05201.1"/>
    <property type="match status" value="1"/>
</dbReference>
<dbReference type="PANTHER" id="PTHR48102">
    <property type="entry name" value="ATP-DEPENDENT CLP PROTEASE ATP-BINDING SUBUNIT CLPX-LIKE, MITOCHONDRIAL-RELATED"/>
    <property type="match status" value="1"/>
</dbReference>
<dbReference type="PANTHER" id="PTHR48102:SF3">
    <property type="entry name" value="ATP-DEPENDENT PROTEASE ATPASE SUBUNIT HSLU"/>
    <property type="match status" value="1"/>
</dbReference>
<dbReference type="Pfam" id="PF00004">
    <property type="entry name" value="AAA"/>
    <property type="match status" value="1"/>
</dbReference>
<dbReference type="Pfam" id="PF07724">
    <property type="entry name" value="AAA_2"/>
    <property type="match status" value="1"/>
</dbReference>
<dbReference type="Pfam" id="PF10431">
    <property type="entry name" value="ClpB_D2-small"/>
    <property type="match status" value="1"/>
</dbReference>
<dbReference type="SMART" id="SM00382">
    <property type="entry name" value="AAA"/>
    <property type="match status" value="1"/>
</dbReference>
<dbReference type="SMART" id="SM01086">
    <property type="entry name" value="ClpB_D2-small"/>
    <property type="match status" value="1"/>
</dbReference>
<dbReference type="SUPFAM" id="SSF52540">
    <property type="entry name" value="P-loop containing nucleoside triphosphate hydrolases"/>
    <property type="match status" value="1"/>
</dbReference>
<evidence type="ECO:0000255" key="1">
    <source>
        <dbReference type="HAMAP-Rule" id="MF_00249"/>
    </source>
</evidence>
<proteinExistence type="inferred from homology"/>
<organism>
    <name type="scientific">Thermosipho africanus (strain TCF52B)</name>
    <dbReference type="NCBI Taxonomy" id="484019"/>
    <lineage>
        <taxon>Bacteria</taxon>
        <taxon>Thermotogati</taxon>
        <taxon>Thermotogota</taxon>
        <taxon>Thermotogae</taxon>
        <taxon>Thermotogales</taxon>
        <taxon>Fervidobacteriaceae</taxon>
        <taxon>Thermosipho</taxon>
    </lineage>
</organism>
<feature type="chain" id="PRO_1000119114" description="ATP-dependent protease ATPase subunit HslU">
    <location>
        <begin position="1"/>
        <end position="459"/>
    </location>
</feature>
<feature type="binding site" evidence="1">
    <location>
        <position position="21"/>
    </location>
    <ligand>
        <name>ATP</name>
        <dbReference type="ChEBI" id="CHEBI:30616"/>
    </ligand>
</feature>
<feature type="binding site" evidence="1">
    <location>
        <begin position="63"/>
        <end position="68"/>
    </location>
    <ligand>
        <name>ATP</name>
        <dbReference type="ChEBI" id="CHEBI:30616"/>
    </ligand>
</feature>
<feature type="binding site" evidence="1">
    <location>
        <position position="273"/>
    </location>
    <ligand>
        <name>ATP</name>
        <dbReference type="ChEBI" id="CHEBI:30616"/>
    </ligand>
</feature>
<feature type="binding site" evidence="1">
    <location>
        <position position="338"/>
    </location>
    <ligand>
        <name>ATP</name>
        <dbReference type="ChEBI" id="CHEBI:30616"/>
    </ligand>
</feature>
<feature type="binding site" evidence="1">
    <location>
        <position position="410"/>
    </location>
    <ligand>
        <name>ATP</name>
        <dbReference type="ChEBI" id="CHEBI:30616"/>
    </ligand>
</feature>
<name>HSLU_THEAB</name>
<sequence>MSDFDKLTPKQIVEELDKYIVGQSKAKKAVAIAIRNRIRRQKLSEEWKKEITPKNILMIGPTGVGKTEIARRLAQLSGSPFLKIEATRFTEVGYVGKNVDSMIRELVEIAVNMVKQQKMKEVEEKAKLNVEERILDALVPMKKKTQIPFANIFGMQMEKPQQTDDYSENLRKREELRRRLRSGELDNEEIEIEIETSNSPIGFIGLPEMEDIGMDLSNVIGNIFPKQKKRRKMKISEAKKVLLPIEEEKLIDMDETIQTALELAQNRGIIFIDEMDKIAAKTGSSGQDVSRQGVQRDLLPIVEGTTITTKYGPVKTDYILFIAAGAFHVSKPSDLIPELQGRFPIRVELEPLKEEDFVRILVEPENALTKQYQALLYTENVQLEFTDDGIKELARVSYKLNQKLENIGARRLYTVLEKVLEDVLFEAPEIEEKIIVDADYVTKKLKGIIEDEDLTSYIL</sequence>
<comment type="function">
    <text evidence="1">ATPase subunit of a proteasome-like degradation complex; this subunit has chaperone activity. The binding of ATP and its subsequent hydrolysis by HslU are essential for unfolding of protein substrates subsequently hydrolyzed by HslV. HslU recognizes the N-terminal part of its protein substrates and unfolds these before they are guided to HslV for hydrolysis.</text>
</comment>
<comment type="subunit">
    <text evidence="1">A double ring-shaped homohexamer of HslV is capped on each side by a ring-shaped HslU homohexamer. The assembly of the HslU/HslV complex is dependent on binding of ATP.</text>
</comment>
<comment type="subcellular location">
    <subcellularLocation>
        <location evidence="1">Cytoplasm</location>
    </subcellularLocation>
</comment>
<comment type="similarity">
    <text evidence="1">Belongs to the ClpX chaperone family. HslU subfamily.</text>
</comment>
<protein>
    <recommendedName>
        <fullName evidence="1">ATP-dependent protease ATPase subunit HslU</fullName>
    </recommendedName>
    <alternativeName>
        <fullName evidence="1">Unfoldase HslU</fullName>
    </alternativeName>
</protein>
<accession>B7IE26</accession>
<gene>
    <name evidence="1" type="primary">hslU</name>
    <name type="ordered locus">THA_1822</name>
</gene>